<accession>B5Y006</accession>
<name>BETI_KLEP3</name>
<proteinExistence type="inferred from homology"/>
<keyword id="KW-0238">DNA-binding</keyword>
<keyword id="KW-0678">Repressor</keyword>
<keyword id="KW-0804">Transcription</keyword>
<keyword id="KW-0805">Transcription regulation</keyword>
<reference key="1">
    <citation type="journal article" date="2008" name="PLoS Genet.">
        <title>Complete genome sequence of the N2-fixing broad host range endophyte Klebsiella pneumoniae 342 and virulence predictions verified in mice.</title>
        <authorList>
            <person name="Fouts D.E."/>
            <person name="Tyler H.L."/>
            <person name="DeBoy R.T."/>
            <person name="Daugherty S."/>
            <person name="Ren Q."/>
            <person name="Badger J.H."/>
            <person name="Durkin A.S."/>
            <person name="Huot H."/>
            <person name="Shrivastava S."/>
            <person name="Kothari S."/>
            <person name="Dodson R.J."/>
            <person name="Mohamoud Y."/>
            <person name="Khouri H."/>
            <person name="Roesch L.F.W."/>
            <person name="Krogfelt K.A."/>
            <person name="Struve C."/>
            <person name="Triplett E.W."/>
            <person name="Methe B.A."/>
        </authorList>
    </citation>
    <scope>NUCLEOTIDE SEQUENCE [LARGE SCALE GENOMIC DNA]</scope>
    <source>
        <strain>342</strain>
    </source>
</reference>
<comment type="function">
    <text evidence="1">Repressor involved in the biosynthesis of the osmoprotectant glycine betaine. It represses transcription of the choline transporter BetT and the genes of BetAB involved in the synthesis of glycine betaine (By similarity).</text>
</comment>
<comment type="pathway">
    <text>Amine and polyamine biosynthesis; betaine biosynthesis via choline pathway [regulation].</text>
</comment>
<feature type="chain" id="PRO_1000190486" description="HTH-type transcriptional regulator BetI">
    <location>
        <begin position="1"/>
        <end position="195"/>
    </location>
</feature>
<feature type="domain" description="HTH tetR-type" evidence="2">
    <location>
        <begin position="8"/>
        <end position="68"/>
    </location>
</feature>
<feature type="DNA-binding region" description="H-T-H motif" evidence="2">
    <location>
        <begin position="31"/>
        <end position="50"/>
    </location>
</feature>
<protein>
    <recommendedName>
        <fullName evidence="2">HTH-type transcriptional regulator BetI</fullName>
    </recommendedName>
</protein>
<evidence type="ECO:0000250" key="1"/>
<evidence type="ECO:0000255" key="2">
    <source>
        <dbReference type="HAMAP-Rule" id="MF_00768"/>
    </source>
</evidence>
<dbReference type="EMBL" id="CP000964">
    <property type="protein sequence ID" value="ACI07642.1"/>
    <property type="molecule type" value="Genomic_DNA"/>
</dbReference>
<dbReference type="SMR" id="B5Y006"/>
<dbReference type="KEGG" id="kpe:KPK_3993"/>
<dbReference type="HOGENOM" id="CLU_069356_15_4_6"/>
<dbReference type="UniPathway" id="UPA00529"/>
<dbReference type="PHI-base" id="PHI:7521"/>
<dbReference type="Proteomes" id="UP000001734">
    <property type="component" value="Chromosome"/>
</dbReference>
<dbReference type="GO" id="GO:0003700">
    <property type="term" value="F:DNA-binding transcription factor activity"/>
    <property type="evidence" value="ECO:0007669"/>
    <property type="project" value="UniProtKB-UniRule"/>
</dbReference>
<dbReference type="GO" id="GO:0000976">
    <property type="term" value="F:transcription cis-regulatory region binding"/>
    <property type="evidence" value="ECO:0007669"/>
    <property type="project" value="TreeGrafter"/>
</dbReference>
<dbReference type="GO" id="GO:0019285">
    <property type="term" value="P:glycine betaine biosynthetic process from choline"/>
    <property type="evidence" value="ECO:0007669"/>
    <property type="project" value="UniProtKB-UniRule"/>
</dbReference>
<dbReference type="GO" id="GO:0045892">
    <property type="term" value="P:negative regulation of DNA-templated transcription"/>
    <property type="evidence" value="ECO:0007669"/>
    <property type="project" value="UniProtKB-UniRule"/>
</dbReference>
<dbReference type="FunFam" id="1.10.357.10:FF:000009">
    <property type="entry name" value="HTH-type transcriptional regulator BetI"/>
    <property type="match status" value="1"/>
</dbReference>
<dbReference type="Gene3D" id="1.10.357.10">
    <property type="entry name" value="Tetracycline Repressor, domain 2"/>
    <property type="match status" value="1"/>
</dbReference>
<dbReference type="HAMAP" id="MF_00768">
    <property type="entry name" value="HTH_type_BetI"/>
    <property type="match status" value="1"/>
</dbReference>
<dbReference type="InterPro" id="IPR039538">
    <property type="entry name" value="BetI_C"/>
</dbReference>
<dbReference type="InterPro" id="IPR023772">
    <property type="entry name" value="DNA-bd_HTH_TetR-type_CS"/>
</dbReference>
<dbReference type="InterPro" id="IPR009057">
    <property type="entry name" value="Homeodomain-like_sf"/>
</dbReference>
<dbReference type="InterPro" id="IPR050109">
    <property type="entry name" value="HTH-type_TetR-like_transc_reg"/>
</dbReference>
<dbReference type="InterPro" id="IPR001647">
    <property type="entry name" value="HTH_TetR"/>
</dbReference>
<dbReference type="InterPro" id="IPR036271">
    <property type="entry name" value="Tet_transcr_reg_TetR-rel_C_sf"/>
</dbReference>
<dbReference type="InterPro" id="IPR017757">
    <property type="entry name" value="Tscrpt_rep_BetI"/>
</dbReference>
<dbReference type="NCBIfam" id="TIGR03384">
    <property type="entry name" value="betaine_BetI"/>
    <property type="match status" value="1"/>
</dbReference>
<dbReference type="NCBIfam" id="NF001978">
    <property type="entry name" value="PRK00767.1"/>
    <property type="match status" value="1"/>
</dbReference>
<dbReference type="PANTHER" id="PTHR30055:SF234">
    <property type="entry name" value="HTH-TYPE TRANSCRIPTIONAL REGULATOR BETI"/>
    <property type="match status" value="1"/>
</dbReference>
<dbReference type="PANTHER" id="PTHR30055">
    <property type="entry name" value="HTH-TYPE TRANSCRIPTIONAL REGULATOR RUTR"/>
    <property type="match status" value="1"/>
</dbReference>
<dbReference type="Pfam" id="PF13977">
    <property type="entry name" value="TetR_C_6"/>
    <property type="match status" value="1"/>
</dbReference>
<dbReference type="Pfam" id="PF00440">
    <property type="entry name" value="TetR_N"/>
    <property type="match status" value="1"/>
</dbReference>
<dbReference type="PRINTS" id="PR00455">
    <property type="entry name" value="HTHTETR"/>
</dbReference>
<dbReference type="SUPFAM" id="SSF46689">
    <property type="entry name" value="Homeodomain-like"/>
    <property type="match status" value="1"/>
</dbReference>
<dbReference type="SUPFAM" id="SSF48498">
    <property type="entry name" value="Tetracyclin repressor-like, C-terminal domain"/>
    <property type="match status" value="1"/>
</dbReference>
<dbReference type="PROSITE" id="PS01081">
    <property type="entry name" value="HTH_TETR_1"/>
    <property type="match status" value="1"/>
</dbReference>
<dbReference type="PROSITE" id="PS50977">
    <property type="entry name" value="HTH_TETR_2"/>
    <property type="match status" value="1"/>
</dbReference>
<gene>
    <name evidence="2" type="primary">betI</name>
    <name type="ordered locus">KPK_3993</name>
</gene>
<sequence length="195" mass="21770">MPKLGMQPIRRRQLIDATLDAINEVGMHDATIAQIARRAGVSTGIISHYFKDKNGLLEATMRDITSQLRDAVLNRLHALPDGSASQRLQAIVGGNFDETQISSAAMKAWLAFWASSMHQPMLYRLQQVSSRRLLSNLVYEFRRELPREQAQEAGYGLAALIDGLWLRAALSGKPLDKTLAQSLTSHFIRQHLPNP</sequence>
<organism>
    <name type="scientific">Klebsiella pneumoniae (strain 342)</name>
    <dbReference type="NCBI Taxonomy" id="507522"/>
    <lineage>
        <taxon>Bacteria</taxon>
        <taxon>Pseudomonadati</taxon>
        <taxon>Pseudomonadota</taxon>
        <taxon>Gammaproteobacteria</taxon>
        <taxon>Enterobacterales</taxon>
        <taxon>Enterobacteriaceae</taxon>
        <taxon>Klebsiella/Raoultella group</taxon>
        <taxon>Klebsiella</taxon>
        <taxon>Klebsiella pneumoniae complex</taxon>
    </lineage>
</organism>